<dbReference type="EC" id="3.1.26.11" evidence="1"/>
<dbReference type="EMBL" id="CP000561">
    <property type="protein sequence ID" value="ABO08528.1"/>
    <property type="molecule type" value="Genomic_DNA"/>
</dbReference>
<dbReference type="RefSeq" id="WP_011849786.1">
    <property type="nucleotide sequence ID" value="NC_009073.1"/>
</dbReference>
<dbReference type="SMR" id="A3MV61"/>
<dbReference type="STRING" id="410359.Pcal_1103"/>
<dbReference type="GeneID" id="4908941"/>
<dbReference type="KEGG" id="pcl:Pcal_1103"/>
<dbReference type="eggNOG" id="arCOG00501">
    <property type="taxonomic scope" value="Archaea"/>
</dbReference>
<dbReference type="HOGENOM" id="CLU_031317_2_1_2"/>
<dbReference type="OrthoDB" id="85118at2157"/>
<dbReference type="Proteomes" id="UP000001431">
    <property type="component" value="Chromosome"/>
</dbReference>
<dbReference type="GO" id="GO:0042781">
    <property type="term" value="F:3'-tRNA processing endoribonuclease activity"/>
    <property type="evidence" value="ECO:0007669"/>
    <property type="project" value="UniProtKB-UniRule"/>
</dbReference>
<dbReference type="GO" id="GO:0008270">
    <property type="term" value="F:zinc ion binding"/>
    <property type="evidence" value="ECO:0007669"/>
    <property type="project" value="UniProtKB-UniRule"/>
</dbReference>
<dbReference type="Gene3D" id="3.60.15.10">
    <property type="entry name" value="Ribonuclease Z/Hydroxyacylglutathione hydrolase-like"/>
    <property type="match status" value="1"/>
</dbReference>
<dbReference type="HAMAP" id="MF_01818">
    <property type="entry name" value="RNase_Z_BN"/>
    <property type="match status" value="1"/>
</dbReference>
<dbReference type="InterPro" id="IPR001279">
    <property type="entry name" value="Metallo-B-lactamas"/>
</dbReference>
<dbReference type="InterPro" id="IPR036866">
    <property type="entry name" value="RibonucZ/Hydroxyglut_hydro"/>
</dbReference>
<dbReference type="InterPro" id="IPR013471">
    <property type="entry name" value="RNase_Z/BN"/>
</dbReference>
<dbReference type="PANTHER" id="PTHR46018">
    <property type="entry name" value="ZINC PHOSPHODIESTERASE ELAC PROTEIN 1"/>
    <property type="match status" value="1"/>
</dbReference>
<dbReference type="PANTHER" id="PTHR46018:SF2">
    <property type="entry name" value="ZINC PHOSPHODIESTERASE ELAC PROTEIN 1"/>
    <property type="match status" value="1"/>
</dbReference>
<dbReference type="Pfam" id="PF12706">
    <property type="entry name" value="Lactamase_B_2"/>
    <property type="match status" value="1"/>
</dbReference>
<dbReference type="SUPFAM" id="SSF56281">
    <property type="entry name" value="Metallo-hydrolase/oxidoreductase"/>
    <property type="match status" value="1"/>
</dbReference>
<keyword id="KW-0255">Endonuclease</keyword>
<keyword id="KW-0378">Hydrolase</keyword>
<keyword id="KW-0479">Metal-binding</keyword>
<keyword id="KW-0540">Nuclease</keyword>
<keyword id="KW-0819">tRNA processing</keyword>
<keyword id="KW-0862">Zinc</keyword>
<gene>
    <name evidence="1" type="primary">rnz</name>
    <name type="ordered locus">Pcal_1103</name>
</gene>
<name>RNZ_PYRCJ</name>
<feature type="chain" id="PRO_1000070324" description="Ribonuclease Z">
    <location>
        <begin position="1"/>
        <end position="287"/>
    </location>
</feature>
<feature type="active site" description="Proton acceptor" evidence="1">
    <location>
        <position position="68"/>
    </location>
</feature>
<feature type="binding site" evidence="1">
    <location>
        <position position="64"/>
    </location>
    <ligand>
        <name>Zn(2+)</name>
        <dbReference type="ChEBI" id="CHEBI:29105"/>
        <label>1</label>
        <note>catalytic</note>
    </ligand>
</feature>
<feature type="binding site" evidence="1">
    <location>
        <position position="66"/>
    </location>
    <ligand>
        <name>Zn(2+)</name>
        <dbReference type="ChEBI" id="CHEBI:29105"/>
        <label>1</label>
        <note>catalytic</note>
    </ligand>
</feature>
<feature type="binding site" evidence="1">
    <location>
        <position position="68"/>
    </location>
    <ligand>
        <name>Zn(2+)</name>
        <dbReference type="ChEBI" id="CHEBI:29105"/>
        <label>2</label>
        <note>catalytic</note>
    </ligand>
</feature>
<feature type="binding site" evidence="1">
    <location>
        <position position="69"/>
    </location>
    <ligand>
        <name>Zn(2+)</name>
        <dbReference type="ChEBI" id="CHEBI:29105"/>
        <label>2</label>
        <note>catalytic</note>
    </ligand>
</feature>
<feature type="binding site" evidence="1">
    <location>
        <position position="124"/>
    </location>
    <ligand>
        <name>Zn(2+)</name>
        <dbReference type="ChEBI" id="CHEBI:29105"/>
        <label>1</label>
        <note>catalytic</note>
    </ligand>
</feature>
<feature type="binding site" evidence="1">
    <location>
        <position position="191"/>
    </location>
    <ligand>
        <name>Zn(2+)</name>
        <dbReference type="ChEBI" id="CHEBI:29105"/>
        <label>1</label>
        <note>catalytic</note>
    </ligand>
</feature>
<feature type="binding site" evidence="1">
    <location>
        <position position="191"/>
    </location>
    <ligand>
        <name>Zn(2+)</name>
        <dbReference type="ChEBI" id="CHEBI:29105"/>
        <label>2</label>
        <note>catalytic</note>
    </ligand>
</feature>
<feature type="binding site" evidence="1">
    <location>
        <position position="250"/>
    </location>
    <ligand>
        <name>Zn(2+)</name>
        <dbReference type="ChEBI" id="CHEBI:29105"/>
        <label>2</label>
        <note>catalytic</note>
    </ligand>
</feature>
<accession>A3MV61</accession>
<proteinExistence type="inferred from homology"/>
<protein>
    <recommendedName>
        <fullName evidence="1">Ribonuclease Z</fullName>
        <shortName evidence="1">RNase Z</shortName>
        <ecNumber evidence="1">3.1.26.11</ecNumber>
    </recommendedName>
    <alternativeName>
        <fullName evidence="1">tRNA 3 endonuclease</fullName>
    </alternativeName>
    <alternativeName>
        <fullName evidence="1">tRNase Z</fullName>
    </alternativeName>
</protein>
<comment type="function">
    <text evidence="1">Zinc phosphodiesterase, which displays some tRNA 3'-processing endonuclease activity. Probably involved in tRNA maturation, by removing a 3'-trailer from precursor tRNA.</text>
</comment>
<comment type="catalytic activity">
    <reaction evidence="1">
        <text>Endonucleolytic cleavage of RNA, removing extra 3' nucleotides from tRNA precursor, generating 3' termini of tRNAs. A 3'-hydroxy group is left at the tRNA terminus and a 5'-phosphoryl group is left at the trailer molecule.</text>
        <dbReference type="EC" id="3.1.26.11"/>
    </reaction>
</comment>
<comment type="cofactor">
    <cofactor evidence="1">
        <name>Zn(2+)</name>
        <dbReference type="ChEBI" id="CHEBI:29105"/>
    </cofactor>
    <text evidence="1">Binds 2 Zn(2+) ions.</text>
</comment>
<comment type="subunit">
    <text evidence="1">Homodimer.</text>
</comment>
<comment type="similarity">
    <text evidence="1">Belongs to the RNase Z family.</text>
</comment>
<reference key="1">
    <citation type="submission" date="2007-02" db="EMBL/GenBank/DDBJ databases">
        <title>Complete sequence of Pyrobaculum calidifontis JCM 11548.</title>
        <authorList>
            <consortium name="US DOE Joint Genome Institute"/>
            <person name="Copeland A."/>
            <person name="Lucas S."/>
            <person name="Lapidus A."/>
            <person name="Barry K."/>
            <person name="Glavina del Rio T."/>
            <person name="Dalin E."/>
            <person name="Tice H."/>
            <person name="Pitluck S."/>
            <person name="Chain P."/>
            <person name="Malfatti S."/>
            <person name="Shin M."/>
            <person name="Vergez L."/>
            <person name="Schmutz J."/>
            <person name="Larimer F."/>
            <person name="Land M."/>
            <person name="Hauser L."/>
            <person name="Kyrpides N."/>
            <person name="Mikhailova N."/>
            <person name="Cozen A.E."/>
            <person name="Fitz-Gibbon S.T."/>
            <person name="House C.H."/>
            <person name="Saltikov C."/>
            <person name="Lowe T.M."/>
            <person name="Richardson P."/>
        </authorList>
    </citation>
    <scope>NUCLEOTIDE SEQUENCE [LARGE SCALE GENOMIC DNA]</scope>
    <source>
        <strain>DSM 21063 / JCM 11548 / VA1</strain>
    </source>
</reference>
<sequence length="287" mass="31682">MPLLKLVFLGTGGAVPKADRMLPAIYLEDWLGHRVLLDAGEGAQYRLLQVGVSPASLTLVAVTHGHEDHVLGLPGLVITSRFLGGKVRVLAPRSMHKALERLGVEVLEGYAAERLKITCVEVCHTVDACGWLFEWDVGYKLDLQKATGLPKWALTSLIKGHPVEVEGRVIRPEDVADPAHRRFKRLLYTGDTGPCPRMWETVGEVDVLIHEATFADDVESQKAHEEGHSTFADALEAARALRAKVLILTHISARYPDKSRHRQLAAQVTPPPHVYVPDDFDTLLVQL</sequence>
<evidence type="ECO:0000255" key="1">
    <source>
        <dbReference type="HAMAP-Rule" id="MF_01818"/>
    </source>
</evidence>
<organism>
    <name type="scientific">Pyrobaculum calidifontis (strain DSM 21063 / JCM 11548 / VA1)</name>
    <dbReference type="NCBI Taxonomy" id="410359"/>
    <lineage>
        <taxon>Archaea</taxon>
        <taxon>Thermoproteota</taxon>
        <taxon>Thermoprotei</taxon>
        <taxon>Thermoproteales</taxon>
        <taxon>Thermoproteaceae</taxon>
        <taxon>Pyrobaculum</taxon>
    </lineage>
</organism>